<proteinExistence type="evidence at transcript level"/>
<reference key="1">
    <citation type="journal article" date="2009" name="Science">
        <title>The genome sequence of taurine cattle: a window to ruminant biology and evolution.</title>
        <authorList>
            <consortium name="The bovine genome sequencing and analysis consortium"/>
        </authorList>
    </citation>
    <scope>NUCLEOTIDE SEQUENCE [LARGE SCALE GENOMIC DNA]</scope>
    <source>
        <strain>Hereford</strain>
    </source>
</reference>
<reference key="2">
    <citation type="journal article" date="2005" name="BMC Genomics">
        <title>Characterization of 954 bovine full-CDS cDNA sequences.</title>
        <authorList>
            <person name="Harhay G.P."/>
            <person name="Sonstegard T.S."/>
            <person name="Keele J.W."/>
            <person name="Heaton M.P."/>
            <person name="Clawson M.L."/>
            <person name="Snelling W.M."/>
            <person name="Wiedmann R.T."/>
            <person name="Van Tassell C.P."/>
            <person name="Smith T.P.L."/>
        </authorList>
    </citation>
    <scope>NUCLEOTIDE SEQUENCE [LARGE SCALE MRNA] (ISOFORM 2)</scope>
</reference>
<accession>Q0V8G2</accession>
<protein>
    <recommendedName>
        <fullName>GA-binding protein subunit beta-2</fullName>
        <shortName>GABP subunit beta-2</shortName>
        <shortName>GABPB-2</shortName>
    </recommendedName>
</protein>
<dbReference type="EMBL" id="BT026256">
    <property type="protein sequence ID" value="ABG67095.1"/>
    <property type="molecule type" value="mRNA"/>
</dbReference>
<dbReference type="RefSeq" id="NP_001069710.1">
    <molecule id="Q0V8G2-2"/>
    <property type="nucleotide sequence ID" value="NM_001076242.1"/>
</dbReference>
<dbReference type="RefSeq" id="XP_010801344.1">
    <property type="nucleotide sequence ID" value="XM_010803042.2"/>
</dbReference>
<dbReference type="SMR" id="Q0V8G2"/>
<dbReference type="FunCoup" id="Q0V8G2">
    <property type="interactions" value="3112"/>
</dbReference>
<dbReference type="STRING" id="9913.ENSBTAP00000020429"/>
<dbReference type="PaxDb" id="9913-ENSBTAP00000020429"/>
<dbReference type="Ensembl" id="ENSBTAT00000033798.4">
    <molecule id="Q0V8G2-1"/>
    <property type="protein sequence ID" value="ENSBTAP00000033707.3"/>
    <property type="gene ID" value="ENSBTAG00000015371.7"/>
</dbReference>
<dbReference type="GeneID" id="540818"/>
<dbReference type="KEGG" id="bta:540818"/>
<dbReference type="CTD" id="126626"/>
<dbReference type="VEuPathDB" id="HostDB:ENSBTAG00000015371"/>
<dbReference type="eggNOG" id="ENOG502QRTX">
    <property type="taxonomic scope" value="Eukaryota"/>
</dbReference>
<dbReference type="GeneTree" id="ENSGT00940000156794"/>
<dbReference type="HOGENOM" id="CLU_000134_12_0_1"/>
<dbReference type="InParanoid" id="Q0V8G2"/>
<dbReference type="OMA" id="QFIVTMQ"/>
<dbReference type="OrthoDB" id="341259at2759"/>
<dbReference type="TreeFam" id="TF326036"/>
<dbReference type="Proteomes" id="UP000009136">
    <property type="component" value="Chromosome 3"/>
</dbReference>
<dbReference type="Bgee" id="ENSBTAG00000015371">
    <property type="expression patterns" value="Expressed in neutrophil and 109 other cell types or tissues"/>
</dbReference>
<dbReference type="GO" id="GO:0005634">
    <property type="term" value="C:nucleus"/>
    <property type="evidence" value="ECO:0000318"/>
    <property type="project" value="GO_Central"/>
</dbReference>
<dbReference type="GO" id="GO:0042802">
    <property type="term" value="F:identical protein binding"/>
    <property type="evidence" value="ECO:0007669"/>
    <property type="project" value="Ensembl"/>
</dbReference>
<dbReference type="GO" id="GO:0000976">
    <property type="term" value="F:transcription cis-regulatory region binding"/>
    <property type="evidence" value="ECO:0000318"/>
    <property type="project" value="GO_Central"/>
</dbReference>
<dbReference type="GO" id="GO:0045944">
    <property type="term" value="P:positive regulation of transcription by RNA polymerase II"/>
    <property type="evidence" value="ECO:0000318"/>
    <property type="project" value="GO_Central"/>
</dbReference>
<dbReference type="FunFam" id="1.25.40.20:FF:000025">
    <property type="entry name" value="GA-binding protein subunit beta-1 isoform X1"/>
    <property type="match status" value="1"/>
</dbReference>
<dbReference type="Gene3D" id="1.25.40.20">
    <property type="entry name" value="Ankyrin repeat-containing domain"/>
    <property type="match status" value="1"/>
</dbReference>
<dbReference type="InterPro" id="IPR050663">
    <property type="entry name" value="Ankyrin-SOCS_Box"/>
</dbReference>
<dbReference type="InterPro" id="IPR002110">
    <property type="entry name" value="Ankyrin_rpt"/>
</dbReference>
<dbReference type="InterPro" id="IPR036770">
    <property type="entry name" value="Ankyrin_rpt-contain_sf"/>
</dbReference>
<dbReference type="PANTHER" id="PTHR24193">
    <property type="entry name" value="ANKYRIN REPEAT PROTEIN"/>
    <property type="match status" value="1"/>
</dbReference>
<dbReference type="PANTHER" id="PTHR24193:SF86">
    <property type="entry name" value="GA-BINDING PROTEIN SUBUNIT BETA-2"/>
    <property type="match status" value="1"/>
</dbReference>
<dbReference type="Pfam" id="PF12796">
    <property type="entry name" value="Ank_2"/>
    <property type="match status" value="2"/>
</dbReference>
<dbReference type="PRINTS" id="PR01415">
    <property type="entry name" value="ANKYRIN"/>
</dbReference>
<dbReference type="SMART" id="SM00248">
    <property type="entry name" value="ANK"/>
    <property type="match status" value="4"/>
</dbReference>
<dbReference type="SUPFAM" id="SSF48403">
    <property type="entry name" value="Ankyrin repeat"/>
    <property type="match status" value="1"/>
</dbReference>
<dbReference type="PROSITE" id="PS50297">
    <property type="entry name" value="ANK_REP_REGION"/>
    <property type="match status" value="1"/>
</dbReference>
<dbReference type="PROSITE" id="PS50088">
    <property type="entry name" value="ANK_REPEAT"/>
    <property type="match status" value="3"/>
</dbReference>
<comment type="function">
    <text evidence="1">May function as transcription factor capable of interacting with purine rich repeats (GA repeats).</text>
</comment>
<comment type="subunit">
    <text evidence="2">Heterotetramer of two alpha and two beta subunits. The C-terminal is necessary for the formation of a heterotetrameric GABP-alpha-2/beta-2 complex, and also facilitates homotypic dimerization. Interacts with ADGRB2.</text>
</comment>
<comment type="subcellular location">
    <subcellularLocation>
        <location evidence="1">Nucleus</location>
    </subcellularLocation>
</comment>
<comment type="alternative products">
    <event type="alternative splicing"/>
    <isoform>
        <id>Q0V8G2-1</id>
        <name>1</name>
        <sequence type="displayed"/>
    </isoform>
    <isoform>
        <id>Q0V8G2-2</id>
        <name>2</name>
        <sequence type="described" ref="VSP_032472"/>
    </isoform>
</comment>
<evidence type="ECO:0000250" key="1"/>
<evidence type="ECO:0000250" key="2">
    <source>
        <dbReference type="UniProtKB" id="P81069"/>
    </source>
</evidence>
<evidence type="ECO:0000255" key="3"/>
<evidence type="ECO:0000256" key="4">
    <source>
        <dbReference type="SAM" id="MobiDB-lite"/>
    </source>
</evidence>
<evidence type="ECO:0000303" key="5">
    <source>
    </source>
</evidence>
<feature type="chain" id="PRO_0000325907" description="GA-binding protein subunit beta-2">
    <location>
        <begin position="1"/>
        <end position="447"/>
    </location>
</feature>
<feature type="repeat" description="ANK 1">
    <location>
        <begin position="5"/>
        <end position="34"/>
    </location>
</feature>
<feature type="repeat" description="ANK 2">
    <location>
        <begin position="37"/>
        <end position="66"/>
    </location>
</feature>
<feature type="repeat" description="ANK 3">
    <location>
        <begin position="70"/>
        <end position="99"/>
    </location>
</feature>
<feature type="repeat" description="ANK 4">
    <location>
        <begin position="103"/>
        <end position="132"/>
    </location>
</feature>
<feature type="repeat" description="ANK 5">
    <location>
        <begin position="136"/>
        <end position="166"/>
    </location>
</feature>
<feature type="region of interest" description="Disordered" evidence="4">
    <location>
        <begin position="418"/>
        <end position="447"/>
    </location>
</feature>
<feature type="coiled-coil region" evidence="3">
    <location>
        <begin position="345"/>
        <end position="395"/>
    </location>
</feature>
<feature type="modified residue" description="Phosphoserine" evidence="2">
    <location>
        <position position="253"/>
    </location>
</feature>
<feature type="splice variant" id="VSP_032472" description="In isoform 2." evidence="5">
    <original>MSLVDLGKRLLEAARKGQDDEVRTLMANGAPFTTDW</original>
    <variation>MSIISPQ</variation>
    <location>
        <begin position="1"/>
        <end position="36"/>
    </location>
</feature>
<gene>
    <name type="primary">GABPB2</name>
</gene>
<organism>
    <name type="scientific">Bos taurus</name>
    <name type="common">Bovine</name>
    <dbReference type="NCBI Taxonomy" id="9913"/>
    <lineage>
        <taxon>Eukaryota</taxon>
        <taxon>Metazoa</taxon>
        <taxon>Chordata</taxon>
        <taxon>Craniata</taxon>
        <taxon>Vertebrata</taxon>
        <taxon>Euteleostomi</taxon>
        <taxon>Mammalia</taxon>
        <taxon>Eutheria</taxon>
        <taxon>Laurasiatheria</taxon>
        <taxon>Artiodactyla</taxon>
        <taxon>Ruminantia</taxon>
        <taxon>Pecora</taxon>
        <taxon>Bovidae</taxon>
        <taxon>Bovinae</taxon>
        <taxon>Bos</taxon>
    </lineage>
</organism>
<name>GABP2_BOVIN</name>
<keyword id="KW-0025">Alternative splicing</keyword>
<keyword id="KW-0040">ANK repeat</keyword>
<keyword id="KW-0175">Coiled coil</keyword>
<keyword id="KW-0539">Nucleus</keyword>
<keyword id="KW-0597">Phosphoprotein</keyword>
<keyword id="KW-1185">Reference proteome</keyword>
<keyword id="KW-0677">Repeat</keyword>
<keyword id="KW-0804">Transcription</keyword>
<keyword id="KW-0805">Transcription regulation</keyword>
<sequence length="447" mass="48475">MSLVDLGKRLLEAARKGQDDEVRTLMANGAPFTTDWLGTSPLHLAAQYGHYSTAEVLLRAGVSRDARTKVDRTPLHMAAADGHAHIVELLVRNGADVNAKDMLKMTALHWATEHHHRDVVELLIKYGADVHAFSKFDKSAFDIALEKNNAEILVILQEAMQNQVNANPERANPVTMATPFIFTSGEVVNLASLVSSASTKTTSGDPHASSTVHFSNSTTSVLATLAALAEASAPLSNSHRATANSEEIIEGNSVDSSIQQVVGSGGQRVITIVTDGIPLGNIQTAIPAGGIGQPFIVTVQDGQQVLTVPAGQVAEETVIEEEAEEAEKLPLTKKPRIEEMTNSVEESKEGTERELLQQRLQEANRRAQEYRHQLLKKEQEAEQYRLRLEAMARQQPNGVDFAMVEEVAEVDAVVVTEREMEERETEVTGAVGTAEPHTGVSMETVST</sequence>